<name>SAE1_XENLA</name>
<proteinExistence type="evidence at transcript level"/>
<sequence length="344" mass="38247">MVEKEEAVISEEEAAQYDRQIRLWGLEAQKRLRTSRVLLVGMRGLGAEVAKNLILAGVKALTLLDHEQVSSEDSRAQFLIPSGSLGQNRAEASLNRARNLNPMVSVEADTENINQKSDDFFTQFDVVCLTSCPSDLLVRVNHICHKHNIKFFTGDVYGYHGSMFADLGEHEFVEEKAKVTKAKPLVEDGPEAKKAKIDPTETILVKKKVQFCPLKDALEIDWRSEKAKSALKKTPTDYFLLQVLMKFRTDKGRDPQPSSYQEDSELLLQICSDVLDSLGVSPDLLPKDFASYCFSEMAPVCAVVGGVLGQEIVKALSLRDAPHNNFFFFDGKTSNGIVDCLGSK</sequence>
<organism>
    <name type="scientific">Xenopus laevis</name>
    <name type="common">African clawed frog</name>
    <dbReference type="NCBI Taxonomy" id="8355"/>
    <lineage>
        <taxon>Eukaryota</taxon>
        <taxon>Metazoa</taxon>
        <taxon>Chordata</taxon>
        <taxon>Craniata</taxon>
        <taxon>Vertebrata</taxon>
        <taxon>Euteleostomi</taxon>
        <taxon>Amphibia</taxon>
        <taxon>Batrachia</taxon>
        <taxon>Anura</taxon>
        <taxon>Pipoidea</taxon>
        <taxon>Pipidae</taxon>
        <taxon>Xenopodinae</taxon>
        <taxon>Xenopus</taxon>
        <taxon>Xenopus</taxon>
    </lineage>
</organism>
<evidence type="ECO:0000250" key="1"/>
<evidence type="ECO:0000305" key="2"/>
<comment type="function">
    <text evidence="1">The heterodimer acts as an E1 ligase for sumo1, sumo2, and sumo3. It mediates ATP-dependent activation of sumo proteins followed by formation of a thioester bond between a sumo protein and a conserved active site cysteine residue on uba2/sae2 (By similarity).</text>
</comment>
<comment type="pathway">
    <text>Protein modification; protein sumoylation.</text>
</comment>
<comment type="subunit">
    <text evidence="1">Heterodimer of sae1 and uba2/sae2. The heterodimer corresponds to the two domains that are encoded on a single polypeptide chain in ubiquitin-activating enzyme E1. Interacts with ube2i (By similarity).</text>
</comment>
<comment type="subcellular location">
    <subcellularLocation>
        <location evidence="1">Nucleus</location>
    </subcellularLocation>
</comment>
<comment type="similarity">
    <text evidence="2">Belongs to the ubiquitin-activating E1 family.</text>
</comment>
<protein>
    <recommendedName>
        <fullName>SUMO-activating enzyme subunit 1</fullName>
    </recommendedName>
    <alternativeName>
        <fullName>SUMO-activating enzyme E1 N subunit</fullName>
    </alternativeName>
    <alternativeName>
        <fullName>Ubiquitin-like 1-activating enzyme E1A</fullName>
    </alternativeName>
</protein>
<feature type="chain" id="PRO_0000268870" description="SUMO-activating enzyme subunit 1">
    <location>
        <begin position="1"/>
        <end position="344"/>
    </location>
</feature>
<gene>
    <name type="primary">sae1</name>
    <name type="synonym">uble1a</name>
</gene>
<accession>Q8JGT5</accession>
<reference key="1">
    <citation type="submission" date="2002-04" db="EMBL/GenBank/DDBJ databases">
        <title>Characterization of SUMO-1 E1 enzyme in Xenopus laevis.</title>
        <authorList>
            <person name="Cavenagh M.M."/>
            <person name="Dasso M."/>
        </authorList>
    </citation>
    <scope>NUCLEOTIDE SEQUENCE [MRNA]</scope>
</reference>
<reference key="2">
    <citation type="submission" date="2004-11" db="EMBL/GenBank/DDBJ databases">
        <authorList>
            <consortium name="NIH - Xenopus Gene Collection (XGC) project"/>
        </authorList>
    </citation>
    <scope>NUCLEOTIDE SEQUENCE [LARGE SCALE MRNA]</scope>
    <source>
        <tissue>Spleen</tissue>
    </source>
</reference>
<keyword id="KW-0436">Ligase</keyword>
<keyword id="KW-0539">Nucleus</keyword>
<keyword id="KW-1185">Reference proteome</keyword>
<keyword id="KW-0833">Ubl conjugation pathway</keyword>
<dbReference type="EMBL" id="AY099426">
    <property type="protein sequence ID" value="AAM47491.1"/>
    <property type="molecule type" value="mRNA"/>
</dbReference>
<dbReference type="EMBL" id="BC086263">
    <property type="protein sequence ID" value="AAH86263.1"/>
    <property type="molecule type" value="mRNA"/>
</dbReference>
<dbReference type="RefSeq" id="NP_001085258.1">
    <property type="nucleotide sequence ID" value="NM_001091789.1"/>
</dbReference>
<dbReference type="SMR" id="Q8JGT5"/>
<dbReference type="BioGRID" id="101723">
    <property type="interactions" value="1"/>
</dbReference>
<dbReference type="DNASU" id="443558"/>
<dbReference type="GeneID" id="443558"/>
<dbReference type="KEGG" id="xla:443558"/>
<dbReference type="AGR" id="Xenbase:XB-GENE-923367"/>
<dbReference type="CTD" id="443558"/>
<dbReference type="Xenbase" id="XB-GENE-923367">
    <property type="gene designation" value="sae1.L"/>
</dbReference>
<dbReference type="OMA" id="EFFGQFD"/>
<dbReference type="OrthoDB" id="412647at2759"/>
<dbReference type="UniPathway" id="UPA00886"/>
<dbReference type="Proteomes" id="UP000186698">
    <property type="component" value="Chromosome 8L"/>
</dbReference>
<dbReference type="Bgee" id="443558">
    <property type="expression patterns" value="Expressed in blastula and 19 other cell types or tissues"/>
</dbReference>
<dbReference type="GO" id="GO:0005737">
    <property type="term" value="C:cytoplasm"/>
    <property type="evidence" value="ECO:0000318"/>
    <property type="project" value="GO_Central"/>
</dbReference>
<dbReference type="GO" id="GO:0031510">
    <property type="term" value="C:SUMO activating enzyme complex"/>
    <property type="evidence" value="ECO:0000250"/>
    <property type="project" value="UniProtKB"/>
</dbReference>
<dbReference type="GO" id="GO:0019948">
    <property type="term" value="F:SUMO activating enzyme activity"/>
    <property type="evidence" value="ECO:0000318"/>
    <property type="project" value="GO_Central"/>
</dbReference>
<dbReference type="GO" id="GO:0016925">
    <property type="term" value="P:protein sumoylation"/>
    <property type="evidence" value="ECO:0000250"/>
    <property type="project" value="UniProtKB"/>
</dbReference>
<dbReference type="CDD" id="cd01492">
    <property type="entry name" value="Aos1_SUMO"/>
    <property type="match status" value="1"/>
</dbReference>
<dbReference type="FunFam" id="3.40.50.720:FF:000274">
    <property type="entry name" value="SUMO-activating enzyme subunit 1 isoform X1"/>
    <property type="match status" value="1"/>
</dbReference>
<dbReference type="Gene3D" id="3.40.50.720">
    <property type="entry name" value="NAD(P)-binding Rossmann-like Domain"/>
    <property type="match status" value="1"/>
</dbReference>
<dbReference type="InterPro" id="IPR045886">
    <property type="entry name" value="ThiF/MoeB/HesA"/>
</dbReference>
<dbReference type="InterPro" id="IPR000594">
    <property type="entry name" value="ThiF_NAD_FAD-bd"/>
</dbReference>
<dbReference type="InterPro" id="IPR035985">
    <property type="entry name" value="Ubiquitin-activating_enz"/>
</dbReference>
<dbReference type="InterPro" id="IPR000011">
    <property type="entry name" value="UBQ/SUMO-activ_enz_E1-like"/>
</dbReference>
<dbReference type="PANTHER" id="PTHR10953:SF162">
    <property type="entry name" value="SUMO-ACTIVATING ENZYME SUBUNIT 1"/>
    <property type="match status" value="1"/>
</dbReference>
<dbReference type="PANTHER" id="PTHR10953">
    <property type="entry name" value="UBIQUITIN-ACTIVATING ENZYME E1"/>
    <property type="match status" value="1"/>
</dbReference>
<dbReference type="Pfam" id="PF00899">
    <property type="entry name" value="ThiF"/>
    <property type="match status" value="1"/>
</dbReference>
<dbReference type="PRINTS" id="PR01849">
    <property type="entry name" value="UBIQUITINACT"/>
</dbReference>
<dbReference type="SUPFAM" id="SSF69572">
    <property type="entry name" value="Activating enzymes of the ubiquitin-like proteins"/>
    <property type="match status" value="1"/>
</dbReference>